<dbReference type="EC" id="3.1.21.-" evidence="1"/>
<dbReference type="EC" id="3.6.4.-" evidence="1"/>
<dbReference type="EMBL" id="M32403">
    <property type="protein sequence ID" value="AAA88220.1"/>
    <property type="molecule type" value="Genomic_DNA"/>
</dbReference>
<dbReference type="SMR" id="P16938"/>
<dbReference type="GO" id="GO:0005524">
    <property type="term" value="F:ATP binding"/>
    <property type="evidence" value="ECO:0007669"/>
    <property type="project" value="UniProtKB-KW"/>
</dbReference>
<dbReference type="GO" id="GO:0016887">
    <property type="term" value="F:ATP hydrolysis activity"/>
    <property type="evidence" value="ECO:0007669"/>
    <property type="project" value="InterPro"/>
</dbReference>
<dbReference type="GO" id="GO:0004519">
    <property type="term" value="F:endonuclease activity"/>
    <property type="evidence" value="ECO:0007669"/>
    <property type="project" value="UniProtKB-KW"/>
</dbReference>
<dbReference type="GO" id="GO:0046872">
    <property type="term" value="F:metal ion binding"/>
    <property type="evidence" value="ECO:0007669"/>
    <property type="project" value="UniProtKB-KW"/>
</dbReference>
<dbReference type="Gene3D" id="3.30.420.280">
    <property type="match status" value="1"/>
</dbReference>
<dbReference type="HAMAP" id="MF_04148">
    <property type="entry name" value="TERL_BPP22"/>
    <property type="match status" value="1"/>
</dbReference>
<dbReference type="InterPro" id="IPR035421">
    <property type="entry name" value="Terminase_6C"/>
</dbReference>
<dbReference type="InterPro" id="IPR044265">
    <property type="entry name" value="Terminase_large_su_BPP22"/>
</dbReference>
<dbReference type="Pfam" id="PF17289">
    <property type="entry name" value="Terminase_6C"/>
    <property type="match status" value="1"/>
</dbReference>
<dbReference type="Pfam" id="PF03237">
    <property type="entry name" value="Terminase_6N"/>
    <property type="match status" value="1"/>
</dbReference>
<sequence>MELDAILDNLSDEEQIELLELLEEEENYRNTHLLYEFTPYSKQREFIDAGHDYQSDVLWLVTSLVSHLLALLKSRFTLPGDTRERKVIRLMVNMAESGKVSVSMSQLSSGIGGETNETVTKTTQRILCGRIEENDEPGYGSPKEDSSWEKSSVLLILLIIFSLSHHRLMVLKMHSICYFKHTRRHRHAAGDTITAYGLTKRLPYSIYAEGLTRTNKYGQFSILTFTPLMGMSDGVTKFLKNPSKSQKVVNMTIYDAEHYTDEQKEQIIASYPEHEREARARGIPTMGSGRIFQIPEETIKCQPFECPDHFYVIDAQDFGWNHPQAHIQLWWDKDADVFYLARVWKKSENTAVQAWGAVKSWANKIPVAWPHDGHQHEKGGGEQLKTQYADAGFSMLPDHATFPDGGNSVESGISELRDLMLEGRFKVFNTCEPFFEEFRLYHRDENGKIVKTNDDVLDATRYGYMMRLRQDDARY</sequence>
<organismHost>
    <name type="scientific">Salmonella</name>
    <dbReference type="NCBI Taxonomy" id="590"/>
</organismHost>
<protein>
    <recommendedName>
        <fullName evidence="1">Terminase, large subunit</fullName>
    </recommendedName>
    <alternativeName>
        <fullName evidence="1">DNA-packaging protein gp2</fullName>
    </alternativeName>
    <domain>
        <recommendedName>
            <fullName evidence="1">Endonuclease</fullName>
            <ecNumber evidence="1">3.1.21.-</ecNumber>
        </recommendedName>
    </domain>
    <domain>
        <recommendedName>
            <fullName evidence="1">ATPase</fullName>
            <ecNumber evidence="1">3.6.4.-</ecNumber>
        </recommendedName>
    </domain>
</protein>
<name>TERL_BPLP7</name>
<accession>P16938</accession>
<gene>
    <name type="primary">2</name>
</gene>
<proteinExistence type="inferred from homology"/>
<comment type="function">
    <text evidence="1">The terminase large subunit acts as an ATP driven molecular motor necessary for viral DNA translocation into empty capsids and as an endonuclease that cuts the viral genome to initiate and to end a packaging reaction. The terminase lies at a unique vertex of the procapsid and is composed of two subunits, a small terminase subunit involved in viral DNA recognition (packaging 'pac' sequence), and a large terminase subunit possessing endonucleolytic and ATPase activities. Both terminase subunits heterooligomerize and are docked on the portal protein to form the packaging machine. The terminase large subunit exhibits endonuclease activity and cleaves the viral genome concatemer once the capsid is full (headful packaging). Once the capsid is packaged with the DNA, the terminase complex is substituted by the tail.</text>
</comment>
<comment type="cofactor">
    <cofactor evidence="1">
        <name>Mg(2+)</name>
        <dbReference type="ChEBI" id="CHEBI:18420"/>
    </cofactor>
    <text evidence="1">Nuclease activity probably requires 2 Mg(2+) ions per subunit.</text>
</comment>
<comment type="subunit">
    <text evidence="1">Interacts with the terminase small subunit; the active complex is composed of dimer of terminase large subunits and a nonamer ring of terminase small subunits. Interacts with the portal protein; this interaction allows the packaging of viral DNA.</text>
</comment>
<comment type="domain">
    <text evidence="1">The ATPase region is in the N-terminus, whereas the nuclease region is in the C-terminus.</text>
</comment>
<comment type="similarity">
    <text evidence="1">Belongs to the Lederbergvirus large terminase family.</text>
</comment>
<organism>
    <name type="scientific">Enterobacteria phage LP7</name>
    <name type="common">Bacteriophage LP7</name>
    <dbReference type="NCBI Taxonomy" id="10750"/>
    <lineage>
        <taxon>Viruses</taxon>
        <taxon>Duplodnaviria</taxon>
        <taxon>Heunggongvirae</taxon>
        <taxon>Uroviricota</taxon>
        <taxon>Caudoviricetes</taxon>
        <taxon>Lederbergvirus</taxon>
    </lineage>
</organism>
<keyword id="KW-0067">ATP-binding</keyword>
<keyword id="KW-0255">Endonuclease</keyword>
<keyword id="KW-0378">Hydrolase</keyword>
<keyword id="KW-0426">Late protein</keyword>
<keyword id="KW-0460">Magnesium</keyword>
<keyword id="KW-0479">Metal-binding</keyword>
<keyword id="KW-0540">Nuclease</keyword>
<keyword id="KW-0547">Nucleotide-binding</keyword>
<keyword id="KW-0231">Viral genome packaging</keyword>
<keyword id="KW-1188">Viral release from host cell</keyword>
<reference key="1">
    <citation type="journal article" date="1990" name="Gene">
        <title>Isolation of fragments with pac function for phage P22 from phage LP7 DNA and comparison of packaging gene 3 sequences.</title>
        <authorList>
            <person name="Petri J.B."/>
            <person name="Schmieger H."/>
        </authorList>
    </citation>
    <scope>NUCLEOTIDE SEQUENCE [GENOMIC DNA]</scope>
</reference>
<feature type="chain" id="PRO_0000077732" description="Terminase, large subunit">
    <location>
        <begin position="1"/>
        <end position="475" status="greater than"/>
    </location>
</feature>
<feature type="region of interest" description="ATPase activity" evidence="1">
    <location>
        <begin position="1"/>
        <end position="282"/>
    </location>
</feature>
<feature type="region of interest" description="Interaction with the terminase small subunit" evidence="1">
    <location>
        <begin position="1"/>
        <end position="58"/>
    </location>
</feature>
<feature type="region of interest" description="Nuclease activity" evidence="1">
    <location>
        <begin position="308"/>
        <end position="475" status="greater than"/>
    </location>
</feature>
<feature type="binding site" evidence="1">
    <location>
        <position position="317"/>
    </location>
    <ligand>
        <name>Mg(2+)</name>
        <dbReference type="ChEBI" id="CHEBI:18420"/>
        <note>catalytic; for nuclease activity</note>
    </ligand>
</feature>
<feature type="binding site" evidence="1">
    <location>
        <position position="455"/>
    </location>
    <ligand>
        <name>Mg(2+)</name>
        <dbReference type="ChEBI" id="CHEBI:18420"/>
        <note>catalytic; for nuclease activity</note>
    </ligand>
</feature>
<feature type="non-terminal residue">
    <location>
        <position position="475"/>
    </location>
</feature>
<evidence type="ECO:0000255" key="1">
    <source>
        <dbReference type="HAMAP-Rule" id="MF_04148"/>
    </source>
</evidence>